<organism>
    <name type="scientific">Shigella flexneri</name>
    <dbReference type="NCBI Taxonomy" id="623"/>
    <lineage>
        <taxon>Bacteria</taxon>
        <taxon>Pseudomonadati</taxon>
        <taxon>Pseudomonadota</taxon>
        <taxon>Gammaproteobacteria</taxon>
        <taxon>Enterobacterales</taxon>
        <taxon>Enterobacteriaceae</taxon>
        <taxon>Shigella</taxon>
    </lineage>
</organism>
<comment type="function">
    <text evidence="3 4">Primary regulator of plasmid-encoded virulence genes. Activates the transcription of icsA (virG) and of virB, which is an activator of the ipaABCD virulence regulon.</text>
</comment>
<comment type="subunit">
    <text evidence="1">Homodimer.</text>
</comment>
<comment type="induction">
    <text>Transcriptionally regulated by FIS at 37 degrees Celsius. Subject to H-NS-mediated transcriptional repression below 32 degrees Celsius and at low pH.</text>
</comment>
<comment type="sequence caution" evidence="5">
    <conflict type="erroneous initiation">
        <sequence resource="EMBL-CDS" id="AAK18362"/>
    </conflict>
    <text>Extended N-terminus.</text>
</comment>
<gene>
    <name type="primary">virF</name>
    <name type="ordered locus">CP0046</name>
</gene>
<keyword id="KW-0010">Activator</keyword>
<keyword id="KW-0238">DNA-binding</keyword>
<keyword id="KW-0614">Plasmid</keyword>
<keyword id="KW-1185">Reference proteome</keyword>
<keyword id="KW-0804">Transcription</keyword>
<keyword id="KW-0805">Transcription regulation</keyword>
<keyword id="KW-0843">Virulence</keyword>
<protein>
    <recommendedName>
        <fullName>Virulence regulon transcriptional activator VirF</fullName>
    </recommendedName>
</protein>
<geneLocation type="plasmid">
    <name>pWR100</name>
</geneLocation>
<geneLocation type="plasmid">
    <name>pWR501</name>
</geneLocation>
<geneLocation type="plasmid">
    <name>pMYSH6000</name>
</geneLocation>
<geneLocation type="plasmid">
    <name>pINV_F6_M1382</name>
</geneLocation>
<geneLocation type="plasmid">
    <name>pCP301</name>
</geneLocation>
<sequence>MMDMGHKNKIDIKVRLHNYIILYAKRCSMTVSSGNETLTIDEGQIAFIERNIQINVSIKKSDSINPFEIISLDRNLLLSIIRIMEPIYSFQHSYSEEKRGLNKKIFLLSEEEVSIDLFKSIKEMPFGKRKIYSLACLLSAVSDEEALYTSISIASSLSFSDQIRKIVEKNIEKRWRLSDISNNLNLSEIAVRKRLESEKLTFQQILLDIRMHHAAKLLLNSQSYINDVSRLIGISSPSYFIRKFNEYYGITPKKFYLYHKKF</sequence>
<name>VIRF_SHIFL</name>
<proteinExistence type="evidence at transcript level"/>
<evidence type="ECO:0000250" key="1">
    <source>
        <dbReference type="UniProtKB" id="P16114"/>
    </source>
</evidence>
<evidence type="ECO:0000255" key="2">
    <source>
        <dbReference type="PROSITE-ProRule" id="PRU00593"/>
    </source>
</evidence>
<evidence type="ECO:0000269" key="3">
    <source>
    </source>
</evidence>
<evidence type="ECO:0000269" key="4">
    <source>
    </source>
</evidence>
<evidence type="ECO:0000305" key="5"/>
<dbReference type="EMBL" id="M29172">
    <property type="protein sequence ID" value="AAA26545.1"/>
    <property type="molecule type" value="Genomic_DNA"/>
</dbReference>
<dbReference type="EMBL" id="X16661">
    <property type="protein sequence ID" value="CAA34648.1"/>
    <property type="molecule type" value="Genomic_DNA"/>
</dbReference>
<dbReference type="EMBL" id="AL391753">
    <property type="protein sequence ID" value="CAC05780.1"/>
    <property type="molecule type" value="Genomic_DNA"/>
</dbReference>
<dbReference type="EMBL" id="AF348706">
    <property type="protein sequence ID" value="AAK18362.1"/>
    <property type="status" value="ALT_INIT"/>
    <property type="molecule type" value="Genomic_DNA"/>
</dbReference>
<dbReference type="EMBL" id="AY206433">
    <property type="protein sequence ID" value="AAP78977.1"/>
    <property type="molecule type" value="Genomic_DNA"/>
</dbReference>
<dbReference type="EMBL" id="AF386526">
    <property type="protein sequence ID" value="AAL72294.2"/>
    <property type="molecule type" value="Genomic_DNA"/>
</dbReference>
<dbReference type="PIR" id="A47605">
    <property type="entry name" value="A47605"/>
</dbReference>
<dbReference type="RefSeq" id="NP_858179.2">
    <property type="nucleotide sequence ID" value="NC_004851.1"/>
</dbReference>
<dbReference type="RefSeq" id="WP_005116773.1">
    <property type="nucleotide sequence ID" value="NZ_WPGT01000232.1"/>
</dbReference>
<dbReference type="RefSeq" id="YP_009062462.1">
    <property type="nucleotide sequence ID" value="NC_024996.1"/>
</dbReference>
<dbReference type="SMR" id="P0A2T1"/>
<dbReference type="PaxDb" id="198214-CP0046"/>
<dbReference type="GeneID" id="1238022"/>
<dbReference type="KEGG" id="sfl:CP0046"/>
<dbReference type="PATRIC" id="fig|198214.7.peg.5287"/>
<dbReference type="HOGENOM" id="CLU_000445_81_4_6"/>
<dbReference type="Proteomes" id="UP000001006">
    <property type="component" value="Plasmid pCP301"/>
</dbReference>
<dbReference type="GO" id="GO:0003700">
    <property type="term" value="F:DNA-binding transcription factor activity"/>
    <property type="evidence" value="ECO:0007669"/>
    <property type="project" value="InterPro"/>
</dbReference>
<dbReference type="GO" id="GO:0043565">
    <property type="term" value="F:sequence-specific DNA binding"/>
    <property type="evidence" value="ECO:0007669"/>
    <property type="project" value="InterPro"/>
</dbReference>
<dbReference type="Gene3D" id="1.10.10.60">
    <property type="entry name" value="Homeodomain-like"/>
    <property type="match status" value="1"/>
</dbReference>
<dbReference type="InterPro" id="IPR009057">
    <property type="entry name" value="Homeodomain-like_sf"/>
</dbReference>
<dbReference type="InterPro" id="IPR018060">
    <property type="entry name" value="HTH_AraC"/>
</dbReference>
<dbReference type="InterPro" id="IPR018062">
    <property type="entry name" value="HTH_AraC-typ_CS"/>
</dbReference>
<dbReference type="InterPro" id="IPR020449">
    <property type="entry name" value="Tscrpt_reg_AraC-type_HTH"/>
</dbReference>
<dbReference type="PANTHER" id="PTHR43280">
    <property type="entry name" value="ARAC-FAMILY TRANSCRIPTIONAL REGULATOR"/>
    <property type="match status" value="1"/>
</dbReference>
<dbReference type="PANTHER" id="PTHR43280:SF33">
    <property type="entry name" value="HTH-TYPE TRANSCRIPTIONAL REGULATOR APPY-RELATED"/>
    <property type="match status" value="1"/>
</dbReference>
<dbReference type="Pfam" id="PF12833">
    <property type="entry name" value="HTH_18"/>
    <property type="match status" value="1"/>
</dbReference>
<dbReference type="PRINTS" id="PR00032">
    <property type="entry name" value="HTHARAC"/>
</dbReference>
<dbReference type="SMART" id="SM00342">
    <property type="entry name" value="HTH_ARAC"/>
    <property type="match status" value="1"/>
</dbReference>
<dbReference type="SUPFAM" id="SSF46689">
    <property type="entry name" value="Homeodomain-like"/>
    <property type="match status" value="1"/>
</dbReference>
<dbReference type="PROSITE" id="PS00041">
    <property type="entry name" value="HTH_ARAC_FAMILY_1"/>
    <property type="match status" value="1"/>
</dbReference>
<dbReference type="PROSITE" id="PS01124">
    <property type="entry name" value="HTH_ARAC_FAMILY_2"/>
    <property type="match status" value="1"/>
</dbReference>
<reference key="1">
    <citation type="journal article" date="1986" name="Infect. Immun.">
        <title>DNA sequence and product analysis of the virF locus responsible for congo red binding and cell invasion in Shigella flexneri 2a.</title>
        <authorList>
            <person name="Sakai T."/>
            <person name="Sasakawa C."/>
            <person name="Makino S."/>
            <person name="Yoshikawa M."/>
        </authorList>
    </citation>
    <scope>NUCLEOTIDE SEQUENCE [GENOMIC DNA]</scope>
    <source>
        <strain>YSH6000 / Serotype 2a</strain>
        <plasmid>pMYSH6000</plasmid>
    </source>
</reference>
<reference key="2">
    <citation type="journal article" date="2000" name="Mol. Microbiol.">
        <title>The virulence plasmid pWR100 and the repertoire of proteins secreted by the type III secretion apparatus of Shigella flexneri.</title>
        <authorList>
            <person name="Buchrieser C."/>
            <person name="Glaser P."/>
            <person name="Rusniok C."/>
            <person name="Nedjari H."/>
            <person name="d'Hauteville H."/>
            <person name="Kunst F."/>
            <person name="Sansonetti P.J."/>
            <person name="Parsot C."/>
        </authorList>
    </citation>
    <scope>NUCLEOTIDE SEQUENCE [GENOMIC DNA]</scope>
    <source>
        <strain>M90T / Serotype 5a</strain>
        <plasmid>pWR100</plasmid>
    </source>
</reference>
<reference key="3">
    <citation type="journal article" date="2001" name="Infect. Immun.">
        <title>Complete DNA sequence and analysis of the large virulence plasmid of Shigella flexneri.</title>
        <authorList>
            <person name="Venkatesan M.M."/>
            <person name="Goldberg M.B."/>
            <person name="Rose D.J."/>
            <person name="Grotbeck E.J."/>
            <person name="Burland V."/>
            <person name="Blattner F.R."/>
        </authorList>
    </citation>
    <scope>NUCLEOTIDE SEQUENCE [GENOMIC DNA]</scope>
    <source>
        <strain>M90T / Serotype 5a</strain>
        <plasmid>pWR501</plasmid>
    </source>
</reference>
<reference key="4">
    <citation type="journal article" date="2003" name="Infect. Immun.">
        <title>Comparison of two major forms of the Shigella virulence plasmid pINV: positive selection is a major force driving the divergence.</title>
        <authorList>
            <person name="Lan R."/>
            <person name="Stevenson G."/>
            <person name="Reeves P.R."/>
        </authorList>
    </citation>
    <scope>NUCLEOTIDE SEQUENCE [GENOMIC DNA]</scope>
    <source>
        <strain>M1382 / Serotype 6</strain>
        <plasmid>pINV_F6_M1382</plasmid>
    </source>
</reference>
<reference key="5">
    <citation type="journal article" date="2002" name="Nucleic Acids Res.">
        <title>Genome sequence of Shigella flexneri 2a: insights into pathogenicity through comparison with genomes of Escherichia coli K12 and O157.</title>
        <authorList>
            <person name="Jin Q."/>
            <person name="Yuan Z."/>
            <person name="Xu J."/>
            <person name="Wang Y."/>
            <person name="Shen Y."/>
            <person name="Lu W."/>
            <person name="Wang J."/>
            <person name="Liu H."/>
            <person name="Yang J."/>
            <person name="Yang F."/>
            <person name="Zhang X."/>
            <person name="Zhang J."/>
            <person name="Yang G."/>
            <person name="Wu H."/>
            <person name="Qu D."/>
            <person name="Dong J."/>
            <person name="Sun L."/>
            <person name="Xue Y."/>
            <person name="Zhao A."/>
            <person name="Gao Y."/>
            <person name="Zhu J."/>
            <person name="Kan B."/>
            <person name="Ding K."/>
            <person name="Chen S."/>
            <person name="Cheng H."/>
            <person name="Yao Z."/>
            <person name="He B."/>
            <person name="Chen R."/>
            <person name="Ma D."/>
            <person name="Qiang B."/>
            <person name="Wen Y."/>
            <person name="Hou Y."/>
            <person name="Yu J."/>
        </authorList>
    </citation>
    <scope>NUCLEOTIDE SEQUENCE [LARGE SCALE GENOMIC DNA]</scope>
    <source>
        <strain>301 / Serotype 2a</strain>
        <plasmid>pCP301</plasmid>
    </source>
</reference>
<reference key="6">
    <citation type="journal article" date="1992" name="Mol. Microbiol.">
        <title>The VirF protein from Shigella flexneri is a member of the AraC transcription factor superfamily and is highly homologous to Rns, a positive regulator of virulence genes in enterotoxigenic Escherichia coli.</title>
        <authorList>
            <person name="Dorman C.J."/>
        </authorList>
    </citation>
    <scope>SIMILARITY TO ARAC FAMILY</scope>
</reference>
<reference key="7">
    <citation type="journal article" date="1989" name="Mol. Microbiol.">
        <title>A dual transcriptional activation system for the 230 kb plasmid genes coding for virulence-associated antigens of Shigella flexneri.</title>
        <authorList>
            <person name="Adler B."/>
            <person name="Sasakawa C."/>
            <person name="Tobe T."/>
            <person name="Makino S."/>
            <person name="Komatsu K."/>
            <person name="Yoshikawa M."/>
        </authorList>
    </citation>
    <scope>FUNCTION</scope>
    <source>
        <strain>YSH6000 / Serotype 2a</strain>
        <plasmid>pMYSH6000</plasmid>
    </source>
</reference>
<reference key="8">
    <citation type="journal article" date="1993" name="J. Bacteriol.">
        <title>Transcriptional control of the invasion regulatory gene virB of Shigella flexneri: activation by virF and repression by H-NS.</title>
        <authorList>
            <person name="Tobe T."/>
            <person name="Yoshikawa M."/>
            <person name="Mizuno T."/>
            <person name="Sasakawa C."/>
        </authorList>
    </citation>
    <scope>FUNCTION</scope>
    <source>
        <strain>YSH6000 / Serotype 2a</strain>
        <plasmid>pMYSH6000</plasmid>
    </source>
</reference>
<reference key="9">
    <citation type="journal article" date="1998" name="Res. Microbiol.">
        <title>A role for H-NS in the regulation of the virF gene of Shigella and enteroinvasive Escherichia coli.</title>
        <authorList>
            <person name="Prosseda G."/>
            <person name="Fradiani P.A."/>
            <person name="Di Lorenzo M."/>
            <person name="Falconi M."/>
            <person name="Micheli G."/>
            <person name="Casalino M."/>
            <person name="Nicoletti M."/>
            <person name="Colonna B."/>
        </authorList>
    </citation>
    <scope>REGULATION</scope>
    <source>
        <strain>YSH6000 / Serotype 2a</strain>
        <plasmid>pMYSH6000</plasmid>
    </source>
</reference>
<reference key="10">
    <citation type="journal article" date="2004" name="Mol. Microbiol.">
        <title>The virF promoter in Shigella: more than just a curved DNA stretch.</title>
        <authorList>
            <person name="Prosseda G."/>
            <person name="Falconi M."/>
            <person name="Giangrossi M."/>
            <person name="Gualerzi C.O."/>
            <person name="Micheli G."/>
            <person name="Colonna B."/>
        </authorList>
    </citation>
    <scope>REGULATION</scope>
    <source>
        <strain>YSH6000 / Serotype 2a</strain>
        <plasmid>pMYSH6000</plasmid>
    </source>
</reference>
<feature type="chain" id="PRO_0000194594" description="Virulence regulon transcriptional activator VirF">
    <location>
        <begin position="1"/>
        <end position="262"/>
    </location>
</feature>
<feature type="domain" description="HTH araC/xylS-type" evidence="2">
    <location>
        <begin position="161"/>
        <end position="258"/>
    </location>
</feature>
<feature type="DNA-binding region" description="H-T-H motif" evidence="2">
    <location>
        <begin position="178"/>
        <end position="199"/>
    </location>
</feature>
<feature type="DNA-binding region" description="H-T-H motif" evidence="2">
    <location>
        <begin position="225"/>
        <end position="248"/>
    </location>
</feature>
<accession>P0A2T1</accession>
<accession>Q04248</accession>
<accession>Q9AFW5</accession>